<proteinExistence type="evidence at protein level"/>
<evidence type="ECO:0000255" key="1">
    <source>
        <dbReference type="HAMAP-Rule" id="MF_00360"/>
    </source>
</evidence>
<evidence type="ECO:0000305" key="2"/>
<evidence type="ECO:0007829" key="3">
    <source>
        <dbReference type="PDB" id="6WUB"/>
    </source>
</evidence>
<gene>
    <name evidence="1" type="primary">rpsF</name>
    <name type="ordered locus">EF_0007</name>
</gene>
<accession>Q839Z0</accession>
<reference key="1">
    <citation type="journal article" date="2003" name="Science">
        <title>Role of mobile DNA in the evolution of vancomycin-resistant Enterococcus faecalis.</title>
        <authorList>
            <person name="Paulsen I.T."/>
            <person name="Banerjei L."/>
            <person name="Myers G.S.A."/>
            <person name="Nelson K.E."/>
            <person name="Seshadri R."/>
            <person name="Read T.D."/>
            <person name="Fouts D.E."/>
            <person name="Eisen J.A."/>
            <person name="Gill S.R."/>
            <person name="Heidelberg J.F."/>
            <person name="Tettelin H."/>
            <person name="Dodson R.J."/>
            <person name="Umayam L.A."/>
            <person name="Brinkac L.M."/>
            <person name="Beanan M.J."/>
            <person name="Daugherty S.C."/>
            <person name="DeBoy R.T."/>
            <person name="Durkin S.A."/>
            <person name="Kolonay J.F."/>
            <person name="Madupu R."/>
            <person name="Nelson W.C."/>
            <person name="Vamathevan J.J."/>
            <person name="Tran B."/>
            <person name="Upton J."/>
            <person name="Hansen T."/>
            <person name="Shetty J."/>
            <person name="Khouri H.M."/>
            <person name="Utterback T.R."/>
            <person name="Radune D."/>
            <person name="Ketchum K.A."/>
            <person name="Dougherty B.A."/>
            <person name="Fraser C.M."/>
        </authorList>
    </citation>
    <scope>NUCLEOTIDE SEQUENCE [LARGE SCALE GENOMIC DNA]</scope>
    <source>
        <strain>ATCC 700802 / V583</strain>
    </source>
</reference>
<sequence>MSQDTKYEIMYIIRPNIDEEAKTALVERFDTILKDNGAEVIESKDWEKRRLAYEMNGFREGIYHIVNVTSPSTAGAINEFDRLAKINDDIIRHMIVKVEA</sequence>
<feature type="chain" id="PRO_0000176766" description="Small ribosomal subunit protein bS6">
    <location>
        <begin position="1"/>
        <end position="100"/>
    </location>
</feature>
<feature type="strand" evidence="3">
    <location>
        <begin position="5"/>
        <end position="13"/>
    </location>
</feature>
<feature type="helix" evidence="3">
    <location>
        <begin position="21"/>
        <end position="34"/>
    </location>
</feature>
<feature type="strand" evidence="3">
    <location>
        <begin position="39"/>
        <end position="50"/>
    </location>
</feature>
<feature type="strand" evidence="3">
    <location>
        <begin position="55"/>
        <end position="57"/>
    </location>
</feature>
<feature type="strand" evidence="3">
    <location>
        <begin position="59"/>
        <end position="70"/>
    </location>
</feature>
<feature type="helix" evidence="3">
    <location>
        <begin position="77"/>
        <end position="84"/>
    </location>
</feature>
<feature type="strand" evidence="3">
    <location>
        <begin position="88"/>
        <end position="94"/>
    </location>
</feature>
<protein>
    <recommendedName>
        <fullName evidence="1">Small ribosomal subunit protein bS6</fullName>
    </recommendedName>
    <alternativeName>
        <fullName evidence="2">30S ribosomal protein S6</fullName>
    </alternativeName>
</protein>
<dbReference type="EMBL" id="AE016830">
    <property type="protein sequence ID" value="AAO79892.1"/>
    <property type="molecule type" value="Genomic_DNA"/>
</dbReference>
<dbReference type="RefSeq" id="NP_813820.1">
    <property type="nucleotide sequence ID" value="NC_004668.1"/>
</dbReference>
<dbReference type="RefSeq" id="WP_002356019.1">
    <property type="nucleotide sequence ID" value="NZ_KE136524.1"/>
</dbReference>
<dbReference type="PDB" id="6WUB">
    <property type="method" value="EM"/>
    <property type="resolution" value="3.20 A"/>
    <property type="chains" value="f=3-99"/>
</dbReference>
<dbReference type="PDB" id="7P7Q">
    <property type="method" value="EM"/>
    <property type="resolution" value="2.40 A"/>
    <property type="chains" value="g=1-100"/>
</dbReference>
<dbReference type="PDB" id="7P7R">
    <property type="method" value="EM"/>
    <property type="resolution" value="2.90 A"/>
    <property type="chains" value="g=1-99"/>
</dbReference>
<dbReference type="PDBsum" id="6WUB"/>
<dbReference type="PDBsum" id="7P7Q"/>
<dbReference type="PDBsum" id="7P7R"/>
<dbReference type="EMDB" id="EMD-13241"/>
<dbReference type="EMDB" id="EMD-13242"/>
<dbReference type="SMR" id="Q839Z0"/>
<dbReference type="STRING" id="226185.EF_0007"/>
<dbReference type="EnsemblBacteria" id="AAO79892">
    <property type="protein sequence ID" value="AAO79892"/>
    <property type="gene ID" value="EF_0007"/>
</dbReference>
<dbReference type="GeneID" id="60892570"/>
<dbReference type="KEGG" id="efa:EF0007"/>
<dbReference type="PATRIC" id="fig|226185.45.peg.247"/>
<dbReference type="eggNOG" id="COG0360">
    <property type="taxonomic scope" value="Bacteria"/>
</dbReference>
<dbReference type="HOGENOM" id="CLU_113441_5_3_9"/>
<dbReference type="Proteomes" id="UP000001415">
    <property type="component" value="Chromosome"/>
</dbReference>
<dbReference type="GO" id="GO:0005737">
    <property type="term" value="C:cytoplasm"/>
    <property type="evidence" value="ECO:0007669"/>
    <property type="project" value="UniProtKB-ARBA"/>
</dbReference>
<dbReference type="GO" id="GO:1990904">
    <property type="term" value="C:ribonucleoprotein complex"/>
    <property type="evidence" value="ECO:0007669"/>
    <property type="project" value="UniProtKB-KW"/>
</dbReference>
<dbReference type="GO" id="GO:0005840">
    <property type="term" value="C:ribosome"/>
    <property type="evidence" value="ECO:0007669"/>
    <property type="project" value="UniProtKB-KW"/>
</dbReference>
<dbReference type="GO" id="GO:0070181">
    <property type="term" value="F:small ribosomal subunit rRNA binding"/>
    <property type="evidence" value="ECO:0007669"/>
    <property type="project" value="TreeGrafter"/>
</dbReference>
<dbReference type="GO" id="GO:0003735">
    <property type="term" value="F:structural constituent of ribosome"/>
    <property type="evidence" value="ECO:0007669"/>
    <property type="project" value="InterPro"/>
</dbReference>
<dbReference type="GO" id="GO:0006412">
    <property type="term" value="P:translation"/>
    <property type="evidence" value="ECO:0007669"/>
    <property type="project" value="UniProtKB-UniRule"/>
</dbReference>
<dbReference type="CDD" id="cd00473">
    <property type="entry name" value="bS6"/>
    <property type="match status" value="1"/>
</dbReference>
<dbReference type="FunFam" id="3.30.70.60:FF:000002">
    <property type="entry name" value="30S ribosomal protein S6"/>
    <property type="match status" value="1"/>
</dbReference>
<dbReference type="Gene3D" id="3.30.70.60">
    <property type="match status" value="1"/>
</dbReference>
<dbReference type="HAMAP" id="MF_00360">
    <property type="entry name" value="Ribosomal_bS6"/>
    <property type="match status" value="1"/>
</dbReference>
<dbReference type="InterPro" id="IPR000529">
    <property type="entry name" value="Ribosomal_bS6"/>
</dbReference>
<dbReference type="InterPro" id="IPR035980">
    <property type="entry name" value="Ribosomal_bS6_sf"/>
</dbReference>
<dbReference type="InterPro" id="IPR020814">
    <property type="entry name" value="Ribosomal_S6_plastid/chlpt"/>
</dbReference>
<dbReference type="InterPro" id="IPR014717">
    <property type="entry name" value="Transl_elong_EF1B/ribsomal_bS6"/>
</dbReference>
<dbReference type="NCBIfam" id="TIGR00166">
    <property type="entry name" value="S6"/>
    <property type="match status" value="1"/>
</dbReference>
<dbReference type="PANTHER" id="PTHR21011">
    <property type="entry name" value="MITOCHONDRIAL 28S RIBOSOMAL PROTEIN S6"/>
    <property type="match status" value="1"/>
</dbReference>
<dbReference type="PANTHER" id="PTHR21011:SF1">
    <property type="entry name" value="SMALL RIBOSOMAL SUBUNIT PROTEIN BS6M"/>
    <property type="match status" value="1"/>
</dbReference>
<dbReference type="Pfam" id="PF01250">
    <property type="entry name" value="Ribosomal_S6"/>
    <property type="match status" value="1"/>
</dbReference>
<dbReference type="SUPFAM" id="SSF54995">
    <property type="entry name" value="Ribosomal protein S6"/>
    <property type="match status" value="1"/>
</dbReference>
<name>RS6_ENTFA</name>
<comment type="function">
    <text evidence="1">Binds together with bS18 to 16S ribosomal RNA.</text>
</comment>
<comment type="similarity">
    <text evidence="1">Belongs to the bacterial ribosomal protein bS6 family.</text>
</comment>
<organism>
    <name type="scientific">Enterococcus faecalis (strain ATCC 700802 / V583)</name>
    <dbReference type="NCBI Taxonomy" id="226185"/>
    <lineage>
        <taxon>Bacteria</taxon>
        <taxon>Bacillati</taxon>
        <taxon>Bacillota</taxon>
        <taxon>Bacilli</taxon>
        <taxon>Lactobacillales</taxon>
        <taxon>Enterococcaceae</taxon>
        <taxon>Enterococcus</taxon>
    </lineage>
</organism>
<keyword id="KW-0002">3D-structure</keyword>
<keyword id="KW-1185">Reference proteome</keyword>
<keyword id="KW-0687">Ribonucleoprotein</keyword>
<keyword id="KW-0689">Ribosomal protein</keyword>
<keyword id="KW-0694">RNA-binding</keyword>
<keyword id="KW-0699">rRNA-binding</keyword>